<name>TXMG1_MACGS</name>
<organism evidence="4">
    <name type="scientific">Macrothele gigas</name>
    <name type="common">Japanese funnel web spider</name>
    <dbReference type="NCBI Taxonomy" id="223896"/>
    <lineage>
        <taxon>Eukaryota</taxon>
        <taxon>Metazoa</taxon>
        <taxon>Ecdysozoa</taxon>
        <taxon>Arthropoda</taxon>
        <taxon>Chelicerata</taxon>
        <taxon>Arachnida</taxon>
        <taxon>Araneae</taxon>
        <taxon>Mygalomorphae</taxon>
        <taxon>Macrothelidae</taxon>
        <taxon>Macrothele</taxon>
    </lineage>
</organism>
<comment type="function">
    <text evidence="2">Insecticidal neurotoxin. Shows competition for site 3 of insect voltage-gated sodium channels (Nav).</text>
</comment>
<comment type="subcellular location">
    <subcellularLocation>
        <location evidence="2 4">Secreted</location>
    </subcellularLocation>
</comment>
<comment type="tissue specificity">
    <text evidence="2 4">Expressed by the venom gland.</text>
</comment>
<comment type="domain">
    <text evidence="1">The presence of a 'disulfide through disulfide knot' structurally defines this protein as a knottin.</text>
</comment>
<comment type="mass spectrometry"/>
<comment type="miscellaneous">
    <text evidence="2">Negative results: has no effect on lepidopteran larvae when injected at 20 pmol/g, or on mice when injected intracranially at 32.8 nmol/g.</text>
</comment>
<comment type="similarity">
    <text evidence="4">Belongs to the neurotoxin 14 (magi-1) family. 09 (magi-1) subfamily.</text>
</comment>
<feature type="peptide" id="PRO_0000045035" description="Mu-hexatoxin-Mg1b">
    <location>
        <begin position="1"/>
        <end position="38"/>
    </location>
</feature>
<feature type="modified residue" description="Serine amide" evidence="2">
    <location>
        <position position="38"/>
    </location>
</feature>
<feature type="disulfide bond" evidence="1">
    <location>
        <begin position="1"/>
        <end position="15"/>
    </location>
</feature>
<feature type="disulfide bond" evidence="1">
    <location>
        <begin position="8"/>
        <end position="20"/>
    </location>
</feature>
<feature type="disulfide bond" evidence="1">
    <location>
        <begin position="14"/>
        <end position="34"/>
    </location>
</feature>
<reference key="1">
    <citation type="journal article" date="2003" name="FEBS Lett.">
        <title>Distinct primary structures of the major peptide toxins from the venom of the spider Macrothele gigas that bind to sites 3 and 4 in the sodium channel.</title>
        <authorList>
            <person name="Corzo G."/>
            <person name="Gilles N."/>
            <person name="Satake H."/>
            <person name="Villegas E."/>
            <person name="Dai L."/>
            <person name="Nakajima T."/>
            <person name="Haupt J."/>
        </authorList>
    </citation>
    <scope>PROTEIN SEQUENCE</scope>
    <scope>FUNCTION</scope>
    <scope>SUBCELLULAR LOCATION</scope>
    <scope>MASS SPECTROMETRY</scope>
    <scope>AMIDATION AT SER-38</scope>
    <scope>DISULFIDE BONDS</scope>
    <source>
        <tissue>Venom</tissue>
    </source>
</reference>
<sequence>CMGYDIHCTDRLPCCFGLECVKTSGYWWYKKTYCRRKS</sequence>
<accession>P83557</accession>
<keyword id="KW-0027">Amidation</keyword>
<keyword id="KW-0903">Direct protein sequencing</keyword>
<keyword id="KW-1015">Disulfide bond</keyword>
<keyword id="KW-0872">Ion channel impairing toxin</keyword>
<keyword id="KW-0960">Knottin</keyword>
<keyword id="KW-0528">Neurotoxin</keyword>
<keyword id="KW-0964">Secreted</keyword>
<keyword id="KW-0800">Toxin</keyword>
<keyword id="KW-0738">Voltage-gated sodium channel impairing toxin</keyword>
<dbReference type="SMR" id="P83557"/>
<dbReference type="ArachnoServer" id="AS000376">
    <property type="toxin name" value="mu-hexatoxin-Mg1b"/>
</dbReference>
<dbReference type="GO" id="GO:0005576">
    <property type="term" value="C:extracellular region"/>
    <property type="evidence" value="ECO:0007669"/>
    <property type="project" value="UniProtKB-SubCell"/>
</dbReference>
<dbReference type="GO" id="GO:0019871">
    <property type="term" value="F:sodium channel inhibitor activity"/>
    <property type="evidence" value="ECO:0007669"/>
    <property type="project" value="InterPro"/>
</dbReference>
<dbReference type="GO" id="GO:0090729">
    <property type="term" value="F:toxin activity"/>
    <property type="evidence" value="ECO:0007669"/>
    <property type="project" value="UniProtKB-KW"/>
</dbReference>
<dbReference type="InterPro" id="IPR012627">
    <property type="entry name" value="Toxin_22"/>
</dbReference>
<dbReference type="Pfam" id="PF08092">
    <property type="entry name" value="Toxin_22"/>
    <property type="match status" value="1"/>
</dbReference>
<proteinExistence type="evidence at protein level"/>
<protein>
    <recommendedName>
        <fullName>Mu-hexatoxin-Mg1b</fullName>
        <shortName>Mu-HXTX-Mg1b</shortName>
    </recommendedName>
    <alternativeName>
        <fullName evidence="3">Neurotoxin magi-1</fullName>
    </alternativeName>
</protein>
<evidence type="ECO:0000250" key="1"/>
<evidence type="ECO:0000269" key="2">
    <source>
    </source>
</evidence>
<evidence type="ECO:0000303" key="3">
    <source>
    </source>
</evidence>
<evidence type="ECO:0000305" key="4"/>